<accession>Q5UPU9</accession>
<keyword id="KW-0040">ANK repeat</keyword>
<keyword id="KW-1185">Reference proteome</keyword>
<keyword id="KW-0677">Repeat</keyword>
<dbReference type="EMBL" id="AY653733">
    <property type="protein sequence ID" value="AAV50545.1"/>
    <property type="molecule type" value="Genomic_DNA"/>
</dbReference>
<dbReference type="SMR" id="Q5UPU9"/>
<dbReference type="KEGG" id="vg:9924883"/>
<dbReference type="Proteomes" id="UP000001134">
    <property type="component" value="Genome"/>
</dbReference>
<dbReference type="InterPro" id="IPR036770">
    <property type="entry name" value="Ankyrin_rpt-contain_sf"/>
</dbReference>
<dbReference type="SUPFAM" id="SSF48403">
    <property type="entry name" value="Ankyrin repeat"/>
    <property type="match status" value="1"/>
</dbReference>
<name>YL273_MIMIV</name>
<gene>
    <name type="ordered locus">MIMI_L273</name>
</gene>
<reference key="1">
    <citation type="journal article" date="2004" name="Science">
        <title>The 1.2-megabase genome sequence of Mimivirus.</title>
        <authorList>
            <person name="Raoult D."/>
            <person name="Audic S."/>
            <person name="Robert C."/>
            <person name="Abergel C."/>
            <person name="Renesto P."/>
            <person name="Ogata H."/>
            <person name="La Scola B."/>
            <person name="Susan M."/>
            <person name="Claverie J.-M."/>
        </authorList>
    </citation>
    <scope>NUCLEOTIDE SEQUENCE [LARGE SCALE GENOMIC DNA]</scope>
    <source>
        <strain>Rowbotham-Bradford</strain>
    </source>
</reference>
<feature type="chain" id="PRO_0000243951" description="Putative ankyrin repeat protein L273">
    <location>
        <begin position="1"/>
        <end position="446"/>
    </location>
</feature>
<feature type="repeat" description="ANK 1">
    <location>
        <begin position="71"/>
        <end position="100"/>
    </location>
</feature>
<feature type="repeat" description="ANK 2">
    <location>
        <begin position="124"/>
        <end position="153"/>
    </location>
</feature>
<feature type="repeat" description="ANK 3">
    <location>
        <begin position="206"/>
        <end position="237"/>
    </location>
</feature>
<feature type="repeat" description="ANK 4">
    <location>
        <begin position="245"/>
        <end position="277"/>
    </location>
</feature>
<feature type="repeat" description="ANK 5">
    <location>
        <begin position="303"/>
        <end position="332"/>
    </location>
</feature>
<feature type="repeat" description="ANK 6">
    <location>
        <begin position="365"/>
        <end position="394"/>
    </location>
</feature>
<sequence length="446" mass="51593">MDLQIDQKIINELLNERDYFDTNETYYCIVDQQHVIDLYQKDLTESIISDNIQKDGYFFTDINTVLDFIANGEFLLQLKVPSKNHELVVISVESGWKSNMILMDSIYCLDSISTFEFLYKKNIDHNKLVSLARKYLNSEMLDFLIDKGLRMRPNLKYISDWATITNNPLESRFNSKLLSRIPFLAVTDTLPGQNNGICIINNVILTDIENLFCELSKGKFVLEVLIPVNEFDKKILMNFNSKGKVWVSEVYCVGYQNLDDISILQHLIALGCNKMHVLLFTIKSHRESSTTMLLSNYVFDKIELEYALCIAAVSGNFNVFSSIINTVKNSYYTTEQKISSLINLDLILREEVNLPVRINYTPTTYTDIILVLAVIGGSVEIICLLLKYFYQQIIDNYHILTKYSIMYENGDMMDLLRNIYKGFYSNFQTNNESDSLFNKNILKTDN</sequence>
<organismHost>
    <name type="scientific">Acanthamoeba polyphaga</name>
    <name type="common">Amoeba</name>
    <dbReference type="NCBI Taxonomy" id="5757"/>
</organismHost>
<organism>
    <name type="scientific">Acanthamoeba polyphaga mimivirus</name>
    <name type="common">APMV</name>
    <dbReference type="NCBI Taxonomy" id="212035"/>
    <lineage>
        <taxon>Viruses</taxon>
        <taxon>Varidnaviria</taxon>
        <taxon>Bamfordvirae</taxon>
        <taxon>Nucleocytoviricota</taxon>
        <taxon>Megaviricetes</taxon>
        <taxon>Imitervirales</taxon>
        <taxon>Mimiviridae</taxon>
        <taxon>Megamimivirinae</taxon>
        <taxon>Mimivirus</taxon>
        <taxon>Mimivirus bradfordmassiliense</taxon>
    </lineage>
</organism>
<protein>
    <recommendedName>
        <fullName>Putative ankyrin repeat protein L273</fullName>
    </recommendedName>
</protein>
<proteinExistence type="predicted"/>